<feature type="chain" id="PRO_0000144876" description="Complexin-2">
    <location>
        <begin position="1"/>
        <end position="134"/>
    </location>
</feature>
<feature type="region of interest" description="Disordered" evidence="4">
    <location>
        <begin position="1"/>
        <end position="114"/>
    </location>
</feature>
<feature type="region of interest" description="Interaction with the SNARE complex" evidence="1">
    <location>
        <begin position="41"/>
        <end position="97"/>
    </location>
</feature>
<feature type="coiled-coil region" evidence="3">
    <location>
        <begin position="28"/>
        <end position="84"/>
    </location>
</feature>
<feature type="compositionally biased region" description="Basic and acidic residues" evidence="4">
    <location>
        <begin position="15"/>
        <end position="85"/>
    </location>
</feature>
<feature type="modified residue" description="Phosphoserine" evidence="2">
    <location>
        <position position="93"/>
    </location>
</feature>
<reference key="1">
    <citation type="journal article" date="1995" name="Cell">
        <title>Complexins: cytosolic proteins that regulate SNAP receptor function.</title>
        <authorList>
            <person name="McMahon H.T."/>
            <person name="Missler M."/>
            <person name="Li C."/>
            <person name="Suedhof T.C."/>
        </authorList>
    </citation>
    <scope>NUCLEOTIDE SEQUENCE [MRNA]</scope>
    <source>
        <strain>129/Sv</strain>
        <tissue>Brain</tissue>
    </source>
</reference>
<reference key="2">
    <citation type="journal article" date="1995" name="FEBS Lett.">
        <title>Identification of two highly homologous presynaptic proteins distinctly localized at the dendritic and somatic synapses.</title>
        <authorList>
            <person name="Takahashi S."/>
            <person name="Yamamoto H."/>
            <person name="Matsuda Z."/>
            <person name="Ogawa M."/>
            <person name="Yagyu K."/>
            <person name="Taniguchi T."/>
            <person name="Miyata T."/>
            <person name="Kaba H."/>
            <person name="Higuchi T."/>
            <person name="Okutani F."/>
            <person name="Fujimoto S."/>
        </authorList>
    </citation>
    <scope>NUCLEOTIDE SEQUENCE [MRNA]</scope>
    <scope>TISSUE SPECIFICITY</scope>
    <scope>SUBCELLULAR LOCATION</scope>
    <source>
        <strain>BALB/cJ</strain>
        <tissue>Brain</tissue>
    </source>
</reference>
<reference key="3">
    <citation type="journal article" date="2005" name="Gene">
        <title>Structural organization of the human complexin 2 gene (CPLX2) and aspects of its functional activity.</title>
        <authorList>
            <person name="Raevskaya N.M."/>
            <person name="Dergunova L.V."/>
            <person name="Vladychenskaya I.P."/>
            <person name="Stavchansky V.V."/>
            <person name="Oborina M.V."/>
            <person name="Poltaraus A.B."/>
            <person name="Limborska S.A."/>
        </authorList>
    </citation>
    <scope>IDENTIFICATION</scope>
    <source>
        <tissue>Brain</tissue>
    </source>
</reference>
<reference key="4">
    <citation type="journal article" date="2001" name="Cell">
        <title>Complexins regulate a late step in Ca2+-dependent neurotransmitter release.</title>
        <authorList>
            <person name="Reim K."/>
            <person name="Mansour M."/>
            <person name="Varoqueaux F."/>
            <person name="McMahon H.T."/>
            <person name="Suedhof T.C."/>
            <person name="Brose N."/>
            <person name="Rosenmund C."/>
        </authorList>
    </citation>
    <scope>FUNCTION</scope>
</reference>
<reference key="5">
    <citation type="journal article" date="2003" name="Hum. Mol. Genet.">
        <title>Complexin II is essential for normal neurological function in mice.</title>
        <authorList>
            <person name="Glynn D."/>
            <person name="Bortnick R.A."/>
            <person name="Morton A.J."/>
        </authorList>
    </citation>
    <scope>FUNCTION</scope>
    <scope>DISRUPTION PHENOTYPE</scope>
</reference>
<reference key="6">
    <citation type="journal article" date="2005" name="J. Cell Biol.">
        <title>Structurally and functionally unique complexins at retinal ribbon synapses.</title>
        <authorList>
            <person name="Reim K."/>
            <person name="Wegmeyer H."/>
            <person name="Brandstaetter J.H."/>
            <person name="Xue M."/>
            <person name="Rosenmund C."/>
            <person name="Dresbach T."/>
            <person name="Hofmann K."/>
            <person name="Brose N."/>
        </authorList>
    </citation>
    <scope>TISSUE SPECIFICITY</scope>
    <scope>DEVELOPMENTAL STAGE</scope>
</reference>
<reference key="7">
    <citation type="journal article" date="2006" name="Mol. Cell. Proteomics">
        <title>Comprehensive identification of phosphorylation sites in postsynaptic density preparations.</title>
        <authorList>
            <person name="Trinidad J.C."/>
            <person name="Specht C.G."/>
            <person name="Thalhammer A."/>
            <person name="Schoepfer R."/>
            <person name="Burlingame A.L."/>
        </authorList>
    </citation>
    <scope>IDENTIFICATION BY MASS SPECTROMETRY [LARGE SCALE ANALYSIS]</scope>
    <source>
        <tissue>Brain</tissue>
    </source>
</reference>
<reference key="8">
    <citation type="journal article" date="2010" name="Cell">
        <title>A tissue-specific atlas of mouse protein phosphorylation and expression.</title>
        <authorList>
            <person name="Huttlin E.L."/>
            <person name="Jedrychowski M.P."/>
            <person name="Elias J.E."/>
            <person name="Goswami T."/>
            <person name="Rad R."/>
            <person name="Beausoleil S.A."/>
            <person name="Villen J."/>
            <person name="Haas W."/>
            <person name="Sowa M.E."/>
            <person name="Gygi S.P."/>
        </authorList>
    </citation>
    <scope>IDENTIFICATION BY MASS SPECTROMETRY [LARGE SCALE ANALYSIS]</scope>
    <source>
        <tissue>Brain</tissue>
    </source>
</reference>
<reference key="9">
    <citation type="journal article" date="2010" name="Mol. Cell. Neurosci.">
        <title>Transcriptional inhibition of REST by NeuroD2 during neuronal differentiation.</title>
        <authorList>
            <person name="Ravanpay A.C."/>
            <person name="Hansen S.J."/>
            <person name="Olson J.M."/>
        </authorList>
    </citation>
    <scope>FUNCTION</scope>
</reference>
<reference key="10">
    <citation type="journal article" date="2013" name="J. Neurosci.">
        <title>Complexin activates exocytosis of distinct secretory vesicles controlled by different synaptotagmins.</title>
        <authorList>
            <person name="Cao P."/>
            <person name="Yang X."/>
            <person name="Suedhof T.C."/>
        </authorList>
    </citation>
    <scope>FUNCTION</scope>
</reference>
<comment type="function">
    <text evidence="5 6 8 9">Negatively regulates the formation of synaptic vesicle clustering at active zone to the presynaptic membrane in postmitotic neurons. Positively regulates a late step in exocytosis of various cytoplasmic vesicles, such as synaptic vesicles and other secretory vesicles (PubMed:11163241, PubMed:23345244). Also involved in mast cell exocytosis (PubMed:11163241). Although not essential for development, seems critical for the acquisition of higher cognitive functions in the adult brain (PubMed:12915444).</text>
</comment>
<comment type="subunit">
    <text evidence="1">Binds to the SNARE core complex containing SNAP25, VAMP2 and STX1A.</text>
</comment>
<comment type="subcellular location">
    <subcellularLocation>
        <location evidence="10">Cytoplasm</location>
        <location evidence="10">Cytosol</location>
    </subcellularLocation>
    <subcellularLocation>
        <location evidence="2">Presynapse</location>
    </subcellularLocation>
    <subcellularLocation>
        <location evidence="2">Nucleus</location>
    </subcellularLocation>
    <subcellularLocation>
        <location evidence="2">Perikaryon</location>
    </subcellularLocation>
    <text evidence="2">Translocated from the perikaryon to the presynaptic terminals during maturation of neuronal cells. In mast cells, cytosol and nucleus. Becomes enriched near plasma membrane following stimulation.</text>
</comment>
<comment type="tissue specificity">
    <text evidence="7 10">Nervous system. Expressed predominantly in brain, where it is present in many regions, including hippocampus and cerebellum. In the retina, present at conventional amacrine cell synapses (at protein level).</text>
</comment>
<comment type="developmental stage">
    <text evidence="7">In the brain, expression starts at P6 and increases to reach a plateau at P20.</text>
</comment>
<comment type="disruption phenotype">
    <text evidence="6">Mice show no obvious phenotypic changes and no significant motor deficiencies. However, they show abnormalities in a number of complex behaviors including exploration, socialization, motor coordination, learning and reversal learning.</text>
</comment>
<comment type="similarity">
    <text evidence="11">Belongs to the complexin/synaphin family.</text>
</comment>
<accession>P84086</accession>
<accession>O09056</accession>
<accession>Q13329</accession>
<accession>Q28184</accession>
<accession>Q32KK4</accession>
<accession>Q64386</accession>
<gene>
    <name type="primary">Cplx2</name>
</gene>
<name>CPLX2_MOUSE</name>
<sequence length="134" mass="15394">MDFVMKQALGGATKDMGKMLGGEEEKDPDAQKKEEERQEALRQQEEERKAKHARMEAEREKVRQQIRDKYGLKKKEEKEAEEKAALEQPCEGSLTRPKKAIPAGCGDEEEEEEESILDTVLKYLPGPLQDMFKK</sequence>
<proteinExistence type="evidence at protein level"/>
<dbReference type="EMBL" id="U35101">
    <property type="protein sequence ID" value="AAC52272.1"/>
    <property type="molecule type" value="Genomic_DNA"/>
</dbReference>
<dbReference type="EMBL" id="D38613">
    <property type="protein sequence ID" value="BAA07604.1"/>
    <property type="molecule type" value="mRNA"/>
</dbReference>
<dbReference type="EMBL" id="BN000501">
    <property type="protein sequence ID" value="CAG26661.1"/>
    <property type="molecule type" value="mRNA"/>
</dbReference>
<dbReference type="EMBL" id="BN000502">
    <property type="protein sequence ID" value="CAG26662.1"/>
    <property type="molecule type" value="mRNA"/>
</dbReference>
<dbReference type="CCDS" id="CCDS36667.1"/>
<dbReference type="PIR" id="S66293">
    <property type="entry name" value="D57233"/>
</dbReference>
<dbReference type="RefSeq" id="NP_001349147.1">
    <property type="nucleotide sequence ID" value="NM_001362218.1"/>
</dbReference>
<dbReference type="RefSeq" id="NP_034076.1">
    <property type="nucleotide sequence ID" value="NM_009946.3"/>
</dbReference>
<dbReference type="RefSeq" id="XP_017170864.1">
    <property type="nucleotide sequence ID" value="XM_017315375.1"/>
</dbReference>
<dbReference type="RefSeq" id="XP_017170865.1">
    <property type="nucleotide sequence ID" value="XM_017315376.3"/>
</dbReference>
<dbReference type="SMR" id="P84086"/>
<dbReference type="BioGRID" id="198860">
    <property type="interactions" value="8"/>
</dbReference>
<dbReference type="CORUM" id="P84086"/>
<dbReference type="FunCoup" id="P84086">
    <property type="interactions" value="384"/>
</dbReference>
<dbReference type="STRING" id="10090.ENSMUSP00000026985"/>
<dbReference type="iPTMnet" id="P84086"/>
<dbReference type="PhosphoSitePlus" id="P84086"/>
<dbReference type="SwissPalm" id="P84086"/>
<dbReference type="PaxDb" id="10090-ENSMUSP00000026985"/>
<dbReference type="PeptideAtlas" id="P84086"/>
<dbReference type="ProteomicsDB" id="283935"/>
<dbReference type="Pumba" id="P84086"/>
<dbReference type="Antibodypedia" id="45968">
    <property type="antibodies" value="174 antibodies from 27 providers"/>
</dbReference>
<dbReference type="DNASU" id="12890"/>
<dbReference type="Ensembl" id="ENSMUST00000026985.9">
    <property type="protein sequence ID" value="ENSMUSP00000026985.9"/>
    <property type="gene ID" value="ENSMUSG00000025867.9"/>
</dbReference>
<dbReference type="GeneID" id="12890"/>
<dbReference type="KEGG" id="mmu:12890"/>
<dbReference type="UCSC" id="uc029sbi.1">
    <property type="organism name" value="mouse"/>
</dbReference>
<dbReference type="AGR" id="MGI:104726"/>
<dbReference type="CTD" id="10814"/>
<dbReference type="MGI" id="MGI:104726">
    <property type="gene designation" value="Cplx2"/>
</dbReference>
<dbReference type="VEuPathDB" id="HostDB:ENSMUSG00000025867"/>
<dbReference type="eggNOG" id="ENOG502RXXI">
    <property type="taxonomic scope" value="Eukaryota"/>
</dbReference>
<dbReference type="GeneTree" id="ENSGT00950000182938"/>
<dbReference type="HOGENOM" id="CLU_132159_1_0_1"/>
<dbReference type="InParanoid" id="P84086"/>
<dbReference type="OMA" id="AKMILGN"/>
<dbReference type="PhylomeDB" id="P84086"/>
<dbReference type="TreeFam" id="TF315172"/>
<dbReference type="BioGRID-ORCS" id="12890">
    <property type="hits" value="1 hit in 80 CRISPR screens"/>
</dbReference>
<dbReference type="ChiTaRS" id="Cplx2">
    <property type="organism name" value="mouse"/>
</dbReference>
<dbReference type="PRO" id="PR:P84086"/>
<dbReference type="Proteomes" id="UP000000589">
    <property type="component" value="Chromosome 13"/>
</dbReference>
<dbReference type="RNAct" id="P84086">
    <property type="molecule type" value="protein"/>
</dbReference>
<dbReference type="Bgee" id="ENSMUSG00000025867">
    <property type="expression patterns" value="Expressed in dentate gyrus of hippocampal formation granule cell and 209 other cell types or tissues"/>
</dbReference>
<dbReference type="GO" id="GO:0044305">
    <property type="term" value="C:calyx of Held"/>
    <property type="evidence" value="ECO:0000314"/>
    <property type="project" value="SynGO"/>
</dbReference>
<dbReference type="GO" id="GO:0005829">
    <property type="term" value="C:cytosol"/>
    <property type="evidence" value="ECO:0007669"/>
    <property type="project" value="UniProtKB-SubCell"/>
</dbReference>
<dbReference type="GO" id="GO:0030425">
    <property type="term" value="C:dendrite"/>
    <property type="evidence" value="ECO:0000266"/>
    <property type="project" value="MGI"/>
</dbReference>
<dbReference type="GO" id="GO:0098978">
    <property type="term" value="C:glutamatergic synapse"/>
    <property type="evidence" value="ECO:0000314"/>
    <property type="project" value="SynGO"/>
</dbReference>
<dbReference type="GO" id="GO:0043025">
    <property type="term" value="C:neuronal cell body"/>
    <property type="evidence" value="ECO:0000266"/>
    <property type="project" value="MGI"/>
</dbReference>
<dbReference type="GO" id="GO:0005634">
    <property type="term" value="C:nucleus"/>
    <property type="evidence" value="ECO:0007669"/>
    <property type="project" value="UniProtKB-SubCell"/>
</dbReference>
<dbReference type="GO" id="GO:0043204">
    <property type="term" value="C:perikaryon"/>
    <property type="evidence" value="ECO:0007669"/>
    <property type="project" value="UniProtKB-SubCell"/>
</dbReference>
<dbReference type="GO" id="GO:0098794">
    <property type="term" value="C:postsynapse"/>
    <property type="evidence" value="ECO:0007669"/>
    <property type="project" value="Ensembl"/>
</dbReference>
<dbReference type="GO" id="GO:0098793">
    <property type="term" value="C:presynapse"/>
    <property type="evidence" value="ECO:0000314"/>
    <property type="project" value="SynGO"/>
</dbReference>
<dbReference type="GO" id="GO:0045202">
    <property type="term" value="C:synapse"/>
    <property type="evidence" value="ECO:0000266"/>
    <property type="project" value="MGI"/>
</dbReference>
<dbReference type="GO" id="GO:0070033">
    <property type="term" value="C:synaptobrevin 2-SNAP-25-syntaxin-1a-complexin II complex"/>
    <property type="evidence" value="ECO:0007669"/>
    <property type="project" value="Ensembl"/>
</dbReference>
<dbReference type="GO" id="GO:0048306">
    <property type="term" value="F:calcium-dependent protein binding"/>
    <property type="evidence" value="ECO:0007669"/>
    <property type="project" value="Ensembl"/>
</dbReference>
<dbReference type="GO" id="GO:0017075">
    <property type="term" value="F:syntaxin-1 binding"/>
    <property type="evidence" value="ECO:0000266"/>
    <property type="project" value="MGI"/>
</dbReference>
<dbReference type="GO" id="GO:0030154">
    <property type="term" value="P:cell differentiation"/>
    <property type="evidence" value="ECO:0007669"/>
    <property type="project" value="UniProtKB-KW"/>
</dbReference>
<dbReference type="GO" id="GO:0043303">
    <property type="term" value="P:mast cell degranulation"/>
    <property type="evidence" value="ECO:0007669"/>
    <property type="project" value="UniProtKB-KW"/>
</dbReference>
<dbReference type="GO" id="GO:0007399">
    <property type="term" value="P:nervous system development"/>
    <property type="evidence" value="ECO:0007669"/>
    <property type="project" value="UniProtKB-KW"/>
</dbReference>
<dbReference type="GO" id="GO:0031915">
    <property type="term" value="P:positive regulation of synaptic plasticity"/>
    <property type="evidence" value="ECO:0000314"/>
    <property type="project" value="UniProtKB"/>
</dbReference>
<dbReference type="GO" id="GO:0031630">
    <property type="term" value="P:regulation of synaptic vesicle fusion to presynaptic active zone membrane"/>
    <property type="evidence" value="ECO:0000314"/>
    <property type="project" value="SynGO"/>
</dbReference>
<dbReference type="GO" id="GO:0016079">
    <property type="term" value="P:synaptic vesicle exocytosis"/>
    <property type="evidence" value="ECO:0007669"/>
    <property type="project" value="Ensembl"/>
</dbReference>
<dbReference type="CDD" id="cd22808">
    <property type="entry name" value="Complexin_NTD_CPLX_I_II"/>
    <property type="match status" value="1"/>
</dbReference>
<dbReference type="FunFam" id="1.20.5.580:FF:000001">
    <property type="entry name" value="Complexin 2"/>
    <property type="match status" value="1"/>
</dbReference>
<dbReference type="Gene3D" id="1.20.5.580">
    <property type="entry name" value="Single Helix bin"/>
    <property type="match status" value="1"/>
</dbReference>
<dbReference type="InterPro" id="IPR008849">
    <property type="entry name" value="Synaphin"/>
</dbReference>
<dbReference type="PANTHER" id="PTHR16705">
    <property type="entry name" value="COMPLEXIN"/>
    <property type="match status" value="1"/>
</dbReference>
<dbReference type="PANTHER" id="PTHR16705:SF9">
    <property type="entry name" value="COMPLEXIN-2"/>
    <property type="match status" value="1"/>
</dbReference>
<dbReference type="Pfam" id="PF05835">
    <property type="entry name" value="Synaphin"/>
    <property type="match status" value="1"/>
</dbReference>
<dbReference type="SUPFAM" id="SSF58038">
    <property type="entry name" value="SNARE fusion complex"/>
    <property type="match status" value="1"/>
</dbReference>
<keyword id="KW-0966">Cell projection</keyword>
<keyword id="KW-0175">Coiled coil</keyword>
<keyword id="KW-0963">Cytoplasm</keyword>
<keyword id="KW-0221">Differentiation</keyword>
<keyword id="KW-0268">Exocytosis</keyword>
<keyword id="KW-0467">Mast cell degranulation</keyword>
<keyword id="KW-0524">Neurogenesis</keyword>
<keyword id="KW-0532">Neurotransmitter transport</keyword>
<keyword id="KW-0539">Nucleus</keyword>
<keyword id="KW-0597">Phosphoprotein</keyword>
<keyword id="KW-1185">Reference proteome</keyword>
<keyword id="KW-0770">Synapse</keyword>
<keyword id="KW-0813">Transport</keyword>
<protein>
    <recommendedName>
        <fullName>Complexin-2</fullName>
    </recommendedName>
    <alternativeName>
        <fullName>921-L</fullName>
    </alternativeName>
    <alternativeName>
        <fullName>Complexin II</fullName>
        <shortName>CPX II</shortName>
    </alternativeName>
    <alternativeName>
        <fullName>Synaphin-1</fullName>
    </alternativeName>
</protein>
<evidence type="ECO:0000250" key="1"/>
<evidence type="ECO:0000250" key="2">
    <source>
        <dbReference type="UniProtKB" id="P84087"/>
    </source>
</evidence>
<evidence type="ECO:0000255" key="3"/>
<evidence type="ECO:0000256" key="4">
    <source>
        <dbReference type="SAM" id="MobiDB-lite"/>
    </source>
</evidence>
<evidence type="ECO:0000269" key="5">
    <source>
    </source>
</evidence>
<evidence type="ECO:0000269" key="6">
    <source>
    </source>
</evidence>
<evidence type="ECO:0000269" key="7">
    <source>
    </source>
</evidence>
<evidence type="ECO:0000269" key="8">
    <source>
    </source>
</evidence>
<evidence type="ECO:0000269" key="9">
    <source>
    </source>
</evidence>
<evidence type="ECO:0000269" key="10">
    <source>
    </source>
</evidence>
<evidence type="ECO:0000305" key="11"/>
<organism>
    <name type="scientific">Mus musculus</name>
    <name type="common">Mouse</name>
    <dbReference type="NCBI Taxonomy" id="10090"/>
    <lineage>
        <taxon>Eukaryota</taxon>
        <taxon>Metazoa</taxon>
        <taxon>Chordata</taxon>
        <taxon>Craniata</taxon>
        <taxon>Vertebrata</taxon>
        <taxon>Euteleostomi</taxon>
        <taxon>Mammalia</taxon>
        <taxon>Eutheria</taxon>
        <taxon>Euarchontoglires</taxon>
        <taxon>Glires</taxon>
        <taxon>Rodentia</taxon>
        <taxon>Myomorpha</taxon>
        <taxon>Muroidea</taxon>
        <taxon>Muridae</taxon>
        <taxon>Murinae</taxon>
        <taxon>Mus</taxon>
        <taxon>Mus</taxon>
    </lineage>
</organism>